<organism>
    <name type="scientific">Caenorhabditis elegans</name>
    <dbReference type="NCBI Taxonomy" id="6239"/>
    <lineage>
        <taxon>Eukaryota</taxon>
        <taxon>Metazoa</taxon>
        <taxon>Ecdysozoa</taxon>
        <taxon>Nematoda</taxon>
        <taxon>Chromadorea</taxon>
        <taxon>Rhabditida</taxon>
        <taxon>Rhabditina</taxon>
        <taxon>Rhabditomorpha</taxon>
        <taxon>Rhabditoidea</taxon>
        <taxon>Rhabditidae</taxon>
        <taxon>Peloderinae</taxon>
        <taxon>Caenorhabditis</taxon>
    </lineage>
</organism>
<dbReference type="EMBL" id="Z82067">
    <property type="protein sequence ID" value="CAB76738.2"/>
    <property type="molecule type" value="Genomic_DNA"/>
</dbReference>
<dbReference type="EMBL" id="Z83234">
    <property type="protein sequence ID" value="CAB76738.2"/>
    <property type="status" value="JOINED"/>
    <property type="molecule type" value="Genomic_DNA"/>
</dbReference>
<dbReference type="EMBL" id="Z83234">
    <property type="protein sequence ID" value="CBY25190.2"/>
    <property type="molecule type" value="Genomic_DNA"/>
</dbReference>
<dbReference type="EMBL" id="Z83234">
    <property type="protein sequence ID" value="CBY25191.1"/>
    <property type="molecule type" value="Genomic_DNA"/>
</dbReference>
<dbReference type="RefSeq" id="NP_001254420.1">
    <molecule id="G5EG14-2"/>
    <property type="nucleotide sequence ID" value="NM_001267491.3"/>
</dbReference>
<dbReference type="RefSeq" id="NP_001254421.1">
    <molecule id="G5EG14-3"/>
    <property type="nucleotide sequence ID" value="NM_001267492.3"/>
</dbReference>
<dbReference type="RefSeq" id="NP_001254422.1">
    <molecule id="G5EG14-1"/>
    <property type="nucleotide sequence ID" value="NM_001267493.4"/>
</dbReference>
<dbReference type="SMR" id="G5EG14"/>
<dbReference type="BioGRID" id="2549094">
    <property type="interactions" value="1"/>
</dbReference>
<dbReference type="BioGRID" id="40348">
    <property type="interactions" value="4"/>
</dbReference>
<dbReference type="FunCoup" id="G5EG14">
    <property type="interactions" value="3075"/>
</dbReference>
<dbReference type="IntAct" id="G5EG14">
    <property type="interactions" value="1"/>
</dbReference>
<dbReference type="STRING" id="6239.W03H9.4a.2"/>
<dbReference type="PaxDb" id="6239-W03H9.4a"/>
<dbReference type="PeptideAtlas" id="G5EG14"/>
<dbReference type="EnsemblMetazoa" id="W03H9.4a.1">
    <molecule id="G5EG14-1"/>
    <property type="protein sequence ID" value="W03H9.4a.1"/>
    <property type="gene ID" value="WBGene00012230"/>
</dbReference>
<dbReference type="EnsemblMetazoa" id="W03H9.4b.1">
    <molecule id="G5EG14-2"/>
    <property type="protein sequence ID" value="W03H9.4b.1"/>
    <property type="gene ID" value="WBGene00012230"/>
</dbReference>
<dbReference type="EnsemblMetazoa" id="W03H9.4c.1">
    <molecule id="G5EG14-3"/>
    <property type="protein sequence ID" value="W03H9.4c.1"/>
    <property type="gene ID" value="WBGene00012230"/>
</dbReference>
<dbReference type="GeneID" id="175066"/>
<dbReference type="KEGG" id="cel:CELE_W03H9.4"/>
<dbReference type="AGR" id="WB:WBGene00012230"/>
<dbReference type="CTD" id="175066"/>
<dbReference type="WormBase" id="W03H9.4a">
    <molecule id="G5EG14-1"/>
    <property type="protein sequence ID" value="CE46363"/>
    <property type="gene ID" value="WBGene00012230"/>
    <property type="gene designation" value="cacn-1"/>
</dbReference>
<dbReference type="WormBase" id="W03H9.4b">
    <molecule id="G5EG14-2"/>
    <property type="protein sequence ID" value="CE46257"/>
    <property type="gene ID" value="WBGene00012230"/>
    <property type="gene designation" value="cacn-1"/>
</dbReference>
<dbReference type="WormBase" id="W03H9.4c">
    <molecule id="G5EG14-3"/>
    <property type="protein sequence ID" value="CE45519"/>
    <property type="gene ID" value="WBGene00012230"/>
    <property type="gene designation" value="cacn-1"/>
</dbReference>
<dbReference type="eggNOG" id="KOG2370">
    <property type="taxonomic scope" value="Eukaryota"/>
</dbReference>
<dbReference type="GeneTree" id="ENSGT00950000183102"/>
<dbReference type="HOGENOM" id="CLU_011759_0_0_1"/>
<dbReference type="InParanoid" id="G5EG14"/>
<dbReference type="OMA" id="HIDFWND"/>
<dbReference type="OrthoDB" id="265955at2759"/>
<dbReference type="PhylomeDB" id="G5EG14"/>
<dbReference type="Reactome" id="R-CEL-72163">
    <property type="pathway name" value="mRNA Splicing - Major Pathway"/>
</dbReference>
<dbReference type="PRO" id="PR:G5EG14"/>
<dbReference type="Proteomes" id="UP000001940">
    <property type="component" value="Chromosome II"/>
</dbReference>
<dbReference type="Bgee" id="WBGene00012230">
    <property type="expression patterns" value="Expressed in adult organism and 8 other cell types or tissues"/>
</dbReference>
<dbReference type="GO" id="GO:0005737">
    <property type="term" value="C:cytoplasm"/>
    <property type="evidence" value="ECO:0000314"/>
    <property type="project" value="UniProtKB"/>
</dbReference>
<dbReference type="GO" id="GO:0005634">
    <property type="term" value="C:nucleus"/>
    <property type="evidence" value="ECO:0000314"/>
    <property type="project" value="UniProtKB"/>
</dbReference>
<dbReference type="GO" id="GO:0005681">
    <property type="term" value="C:spliceosomal complex"/>
    <property type="evidence" value="ECO:0000314"/>
    <property type="project" value="WormBase"/>
</dbReference>
<dbReference type="GO" id="GO:0003723">
    <property type="term" value="F:RNA binding"/>
    <property type="evidence" value="ECO:0000250"/>
    <property type="project" value="WormBase"/>
</dbReference>
<dbReference type="GO" id="GO:0008406">
    <property type="term" value="P:gonad development"/>
    <property type="evidence" value="ECO:0000315"/>
    <property type="project" value="UniProtKB"/>
</dbReference>
<dbReference type="GO" id="GO:0045292">
    <property type="term" value="P:mRNA cis splicing, via spliceosome"/>
    <property type="evidence" value="ECO:0000318"/>
    <property type="project" value="GO_Central"/>
</dbReference>
<dbReference type="GO" id="GO:0000398">
    <property type="term" value="P:mRNA splicing, via spliceosome"/>
    <property type="evidence" value="ECO:0000250"/>
    <property type="project" value="UniProtKB"/>
</dbReference>
<dbReference type="GO" id="GO:0030335">
    <property type="term" value="P:positive regulation of cell migration"/>
    <property type="evidence" value="ECO:0000315"/>
    <property type="project" value="UniProtKB"/>
</dbReference>
<dbReference type="GO" id="GO:0030334">
    <property type="term" value="P:regulation of cell migration"/>
    <property type="evidence" value="ECO:0000315"/>
    <property type="project" value="WormBase"/>
</dbReference>
<dbReference type="GO" id="GO:0010468">
    <property type="term" value="P:regulation of gene expression"/>
    <property type="evidence" value="ECO:0000315"/>
    <property type="project" value="UniProtKB"/>
</dbReference>
<dbReference type="GO" id="GO:0030111">
    <property type="term" value="P:regulation of Wnt signaling pathway"/>
    <property type="evidence" value="ECO:0000315"/>
    <property type="project" value="WormBase"/>
</dbReference>
<dbReference type="InterPro" id="IPR019134">
    <property type="entry name" value="Cactin_C"/>
</dbReference>
<dbReference type="InterPro" id="IPR018816">
    <property type="entry name" value="Cactin_central"/>
</dbReference>
<dbReference type="PANTHER" id="PTHR21737">
    <property type="entry name" value="POLYGLUTAMINE BINDING PROTEIN 1/MARVEL MEMBRANE-ASSOCIATING DOMAIN CONTAINING 3"/>
    <property type="match status" value="1"/>
</dbReference>
<dbReference type="PANTHER" id="PTHR21737:SF4">
    <property type="entry name" value="SPLICING FACTOR CACTIN"/>
    <property type="match status" value="1"/>
</dbReference>
<dbReference type="Pfam" id="PF10312">
    <property type="entry name" value="Cactin_mid"/>
    <property type="match status" value="1"/>
</dbReference>
<dbReference type="Pfam" id="PF09732">
    <property type="entry name" value="CactinC_cactus"/>
    <property type="match status" value="1"/>
</dbReference>
<dbReference type="SMART" id="SM01050">
    <property type="entry name" value="CactinC_cactus"/>
    <property type="match status" value="1"/>
</dbReference>
<keyword id="KW-0025">Alternative splicing</keyword>
<keyword id="KW-0175">Coiled coil</keyword>
<keyword id="KW-0963">Cytoplasm</keyword>
<keyword id="KW-0217">Developmental protein</keyword>
<keyword id="KW-0539">Nucleus</keyword>
<keyword id="KW-1185">Reference proteome</keyword>
<protein>
    <recommendedName>
        <fullName evidence="5">Splicing factor Cactin</fullName>
    </recommendedName>
</protein>
<sequence>MGKDSKKHKKERRRERSPSTSDSDEERLQKRLAEQRSLKKDEKRRQKEEMKKNESAEEKRARRMEKKMRKDAKRKDADAEDTLIPPELNYTNLNNPFNDTKLTQTFVWGKKLEREGKSGLTQDEITKQTSQRIRKNLHEAAEFKRIRDSRAAAKEDMEMMKRDADLRAGQISDTKEREFQMDQIKERTRIRIDQGRAKAIDLLSRYARFADENPHTAKIPDFELENPMEYLKASCKSVDDYEDLIEDIKTYREVDGWAKNETWWMDVTRIAEDEIQKKAAQNRGDVHASVQTEVQNMFKNKSIDELLKLEDQMDAKIRGNSGNKGYWQDLDDQLKVFIARKRLREHHGRVLRLQLAIIKEEQKKEIQQQESEELLPVAEVPPQVKIQKEEEEEEEEDEDDEKISKKVRRKIDVQTLDDPELDEPERERKWRALTGDQLDDVTRELYRIGCYSPTYISADDTMPGIEILDEQADVDNLTERRNRNRGTLPSSSAASSGAPQGASSKMMAIAREGMEADESIFGAEEQLAAQRHLWSDKYRPRKPTYLNRVQTGFDWNKYNQTHYDQDNPPPKIVQGYKFNIFYPDLLDMTVAPRFGLTSCEDPDFAIIRFKAGPPYEDIAFKVVNREWETLHKNGYKCQFQNGVFQLWFMFKKYRYRR</sequence>
<comment type="function">
    <text evidence="1 4">Plays a role in pre-mRNA splicing by facilitating excision of a subset of introns (By similarity). Plays a role during early embryonic development (PubMed:20188721). Required for the distal tip cell migration at the end of larval development and for gonad morphogenesis (PubMed:20188721).</text>
</comment>
<comment type="subcellular location">
    <subcellularLocation>
        <location evidence="4">Nucleus</location>
    </subcellularLocation>
    <subcellularLocation>
        <location evidence="4">Cytoplasm</location>
    </subcellularLocation>
</comment>
<comment type="alternative products">
    <event type="alternative splicing"/>
    <isoform>
        <id>G5EG14-1</id>
        <name>a</name>
        <sequence type="displayed"/>
    </isoform>
    <isoform>
        <id>G5EG14-2</id>
        <name>b</name>
        <sequence type="described" ref="VSP_044144"/>
    </isoform>
    <isoform>
        <id>G5EG14-3</id>
        <name>c</name>
        <sequence type="described" ref="VSP_044143"/>
    </isoform>
</comment>
<comment type="tissue specificity">
    <text evidence="4">Expressed in pharynx, intestine, vulva and spermatheca (at protein level).</text>
</comment>
<comment type="developmental stage">
    <text evidence="4">Expressed in migrating distal tip cells throughout larval development (at protein level).</text>
</comment>
<comment type="similarity">
    <text evidence="5">Belongs to the CACTIN family.</text>
</comment>
<name>CATIN_CAEEL</name>
<feature type="chain" id="PRO_0000419267" description="Splicing factor Cactin">
    <location>
        <begin position="1"/>
        <end position="657"/>
    </location>
</feature>
<feature type="region of interest" description="Disordered" evidence="3">
    <location>
        <begin position="1"/>
        <end position="83"/>
    </location>
</feature>
<feature type="region of interest" description="Disordered" evidence="3">
    <location>
        <begin position="369"/>
        <end position="406"/>
    </location>
</feature>
<feature type="region of interest" description="Disordered" evidence="3">
    <location>
        <begin position="472"/>
        <end position="503"/>
    </location>
</feature>
<feature type="coiled-coil region" evidence="2">
    <location>
        <begin position="23"/>
        <end position="77"/>
    </location>
</feature>
<feature type="coiled-coil region" evidence="2">
    <location>
        <begin position="352"/>
        <end position="403"/>
    </location>
</feature>
<feature type="compositionally biased region" description="Basic residues" evidence="3">
    <location>
        <begin position="1"/>
        <end position="15"/>
    </location>
</feature>
<feature type="compositionally biased region" description="Basic and acidic residues" evidence="3">
    <location>
        <begin position="26"/>
        <end position="60"/>
    </location>
</feature>
<feature type="compositionally biased region" description="Basic residues" evidence="3">
    <location>
        <begin position="61"/>
        <end position="72"/>
    </location>
</feature>
<feature type="compositionally biased region" description="Acidic residues" evidence="3">
    <location>
        <begin position="389"/>
        <end position="401"/>
    </location>
</feature>
<feature type="compositionally biased region" description="Low complexity" evidence="3">
    <location>
        <begin position="489"/>
        <end position="503"/>
    </location>
</feature>
<feature type="splice variant" id="VSP_044143" description="In isoform c." evidence="5">
    <location>
        <begin position="1"/>
        <end position="461"/>
    </location>
</feature>
<feature type="splice variant" id="VSP_044144" description="In isoform b." evidence="5">
    <location>
        <begin position="1"/>
        <end position="312"/>
    </location>
</feature>
<evidence type="ECO:0000250" key="1">
    <source>
        <dbReference type="UniProtKB" id="Q8WUQ7"/>
    </source>
</evidence>
<evidence type="ECO:0000255" key="2"/>
<evidence type="ECO:0000256" key="3">
    <source>
        <dbReference type="SAM" id="MobiDB-lite"/>
    </source>
</evidence>
<evidence type="ECO:0000269" key="4">
    <source>
    </source>
</evidence>
<evidence type="ECO:0000305" key="5"/>
<accession>G5EG14</accession>
<accession>E5QCI6</accession>
<accession>E5QCI7</accession>
<gene>
    <name type="primary">cacn-1</name>
    <name type="ORF">W03H9.4</name>
</gene>
<reference key="1">
    <citation type="journal article" date="1998" name="Science">
        <title>Genome sequence of the nematode C. elegans: a platform for investigating biology.</title>
        <authorList>
            <consortium name="The C. elegans sequencing consortium"/>
        </authorList>
    </citation>
    <scope>NUCLEOTIDE SEQUENCE [LARGE SCALE GENOMIC DNA]</scope>
    <scope>ALTERNATIVE SPLICING</scope>
    <source>
        <strain>Bristol N2</strain>
    </source>
</reference>
<reference key="2">
    <citation type="journal article" date="2010" name="Dev. Biol.">
        <title>CACN-1/Cactin interacts genetically with MIG-2 GTPase signaling to control distal tip cell migration in C. elegans.</title>
        <authorList>
            <person name="Tannoury H."/>
            <person name="Rodriguez V."/>
            <person name="Kovacevic I."/>
            <person name="Ibourk M."/>
            <person name="Lee M."/>
            <person name="Cram E.J."/>
        </authorList>
    </citation>
    <scope>FUNCTION</scope>
    <scope>SUBCELLULAR LOCATION</scope>
    <scope>TISSUE SPECIFICITY</scope>
    <scope>DEVELOPMENTAL STAGE</scope>
</reference>
<proteinExistence type="evidence at protein level"/>